<gene>
    <name evidence="1" type="primary">thiC2</name>
    <name type="ordered locus">MA_4329</name>
</gene>
<reference key="1">
    <citation type="journal article" date="2002" name="Genome Res.">
        <title>The genome of Methanosarcina acetivorans reveals extensive metabolic and physiological diversity.</title>
        <authorList>
            <person name="Galagan J.E."/>
            <person name="Nusbaum C."/>
            <person name="Roy A."/>
            <person name="Endrizzi M.G."/>
            <person name="Macdonald P."/>
            <person name="FitzHugh W."/>
            <person name="Calvo S."/>
            <person name="Engels R."/>
            <person name="Smirnov S."/>
            <person name="Atnoor D."/>
            <person name="Brown A."/>
            <person name="Allen N."/>
            <person name="Naylor J."/>
            <person name="Stange-Thomann N."/>
            <person name="DeArellano K."/>
            <person name="Johnson R."/>
            <person name="Linton L."/>
            <person name="McEwan P."/>
            <person name="McKernan K."/>
            <person name="Talamas J."/>
            <person name="Tirrell A."/>
            <person name="Ye W."/>
            <person name="Zimmer A."/>
            <person name="Barber R.D."/>
            <person name="Cann I."/>
            <person name="Graham D.E."/>
            <person name="Grahame D.A."/>
            <person name="Guss A.M."/>
            <person name="Hedderich R."/>
            <person name="Ingram-Smith C."/>
            <person name="Kuettner H.C."/>
            <person name="Krzycki J.A."/>
            <person name="Leigh J.A."/>
            <person name="Li W."/>
            <person name="Liu J."/>
            <person name="Mukhopadhyay B."/>
            <person name="Reeve J.N."/>
            <person name="Smith K."/>
            <person name="Springer T.A."/>
            <person name="Umayam L.A."/>
            <person name="White O."/>
            <person name="White R.H."/>
            <person name="de Macario E.C."/>
            <person name="Ferry J.G."/>
            <person name="Jarrell K.F."/>
            <person name="Jing H."/>
            <person name="Macario A.J.L."/>
            <person name="Paulsen I.T."/>
            <person name="Pritchett M."/>
            <person name="Sowers K.R."/>
            <person name="Swanson R.V."/>
            <person name="Zinder S.H."/>
            <person name="Lander E."/>
            <person name="Metcalf W.W."/>
            <person name="Birren B."/>
        </authorList>
    </citation>
    <scope>NUCLEOTIDE SEQUENCE [LARGE SCALE GENOMIC DNA]</scope>
    <source>
        <strain>ATCC 35395 / DSM 2834 / JCM 12185 / C2A</strain>
    </source>
</reference>
<protein>
    <recommendedName>
        <fullName evidence="1">Phosphomethylpyrimidine synthase 2</fullName>
        <ecNumber evidence="1">4.1.99.17</ecNumber>
    </recommendedName>
    <alternativeName>
        <fullName evidence="1">Hydroxymethylpyrimidine phosphate synthase 2</fullName>
        <shortName evidence="1">HMP-P synthase 2</shortName>
        <shortName evidence="1">HMP-phosphate synthase 2</shortName>
        <shortName evidence="1">HMPP synthase 2</shortName>
    </alternativeName>
    <alternativeName>
        <fullName evidence="1">Thiamine biosynthesis protein ThiC 2</fullName>
    </alternativeName>
</protein>
<comment type="function">
    <text evidence="1">Catalyzes the synthesis of the hydroxymethylpyrimidine phosphate (HMP-P) moiety of thiamine from aminoimidazole ribotide (AIR) in a radical S-adenosyl-L-methionine (SAM)-dependent reaction.</text>
</comment>
<comment type="catalytic activity">
    <reaction evidence="1">
        <text>5-amino-1-(5-phospho-beta-D-ribosyl)imidazole + S-adenosyl-L-methionine = 4-amino-2-methyl-5-(phosphooxymethyl)pyrimidine + CO + 5'-deoxyadenosine + formate + L-methionine + 3 H(+)</text>
        <dbReference type="Rhea" id="RHEA:24840"/>
        <dbReference type="ChEBI" id="CHEBI:15378"/>
        <dbReference type="ChEBI" id="CHEBI:15740"/>
        <dbReference type="ChEBI" id="CHEBI:17245"/>
        <dbReference type="ChEBI" id="CHEBI:17319"/>
        <dbReference type="ChEBI" id="CHEBI:57844"/>
        <dbReference type="ChEBI" id="CHEBI:58354"/>
        <dbReference type="ChEBI" id="CHEBI:59789"/>
        <dbReference type="ChEBI" id="CHEBI:137981"/>
        <dbReference type="EC" id="4.1.99.17"/>
    </reaction>
</comment>
<comment type="cofactor">
    <cofactor evidence="1">
        <name>[4Fe-4S] cluster</name>
        <dbReference type="ChEBI" id="CHEBI:49883"/>
    </cofactor>
    <text evidence="1">Binds 1 [4Fe-4S] cluster per subunit. The cluster is coordinated with 3 cysteines and an exchangeable S-adenosyl-L-methionine.</text>
</comment>
<comment type="pathway">
    <text evidence="1">Cofactor biosynthesis; thiamine diphosphate biosynthesis.</text>
</comment>
<comment type="similarity">
    <text evidence="1">Belongs to the ThiC family.</text>
</comment>
<dbReference type="EC" id="4.1.99.17" evidence="1"/>
<dbReference type="EMBL" id="AE010299">
    <property type="protein sequence ID" value="AAM07672.1"/>
    <property type="molecule type" value="Genomic_DNA"/>
</dbReference>
<dbReference type="RefSeq" id="WP_011024209.1">
    <property type="nucleotide sequence ID" value="NC_003552.1"/>
</dbReference>
<dbReference type="SMR" id="Q8TI28"/>
<dbReference type="STRING" id="188937.MA_4329"/>
<dbReference type="EnsemblBacteria" id="AAM07672">
    <property type="protein sequence ID" value="AAM07672"/>
    <property type="gene ID" value="MA_4329"/>
</dbReference>
<dbReference type="GeneID" id="1476223"/>
<dbReference type="KEGG" id="mac:MA_4329"/>
<dbReference type="HOGENOM" id="CLU_013181_2_2_2"/>
<dbReference type="InParanoid" id="Q8TI28"/>
<dbReference type="OrthoDB" id="335406at2157"/>
<dbReference type="PhylomeDB" id="Q8TI28"/>
<dbReference type="UniPathway" id="UPA00060"/>
<dbReference type="Proteomes" id="UP000002487">
    <property type="component" value="Chromosome"/>
</dbReference>
<dbReference type="GO" id="GO:0051539">
    <property type="term" value="F:4 iron, 4 sulfur cluster binding"/>
    <property type="evidence" value="ECO:0007669"/>
    <property type="project" value="UniProtKB-KW"/>
</dbReference>
<dbReference type="GO" id="GO:0016830">
    <property type="term" value="F:carbon-carbon lyase activity"/>
    <property type="evidence" value="ECO:0007669"/>
    <property type="project" value="InterPro"/>
</dbReference>
<dbReference type="GO" id="GO:0008270">
    <property type="term" value="F:zinc ion binding"/>
    <property type="evidence" value="ECO:0007669"/>
    <property type="project" value="UniProtKB-UniRule"/>
</dbReference>
<dbReference type="GO" id="GO:0009228">
    <property type="term" value="P:thiamine biosynthetic process"/>
    <property type="evidence" value="ECO:0007669"/>
    <property type="project" value="UniProtKB-KW"/>
</dbReference>
<dbReference type="GO" id="GO:0009229">
    <property type="term" value="P:thiamine diphosphate biosynthetic process"/>
    <property type="evidence" value="ECO:0007669"/>
    <property type="project" value="UniProtKB-UniRule"/>
</dbReference>
<dbReference type="Gene3D" id="6.10.250.620">
    <property type="match status" value="1"/>
</dbReference>
<dbReference type="Gene3D" id="3.20.20.540">
    <property type="entry name" value="Radical SAM ThiC family, central domain"/>
    <property type="match status" value="1"/>
</dbReference>
<dbReference type="HAMAP" id="MF_00089">
    <property type="entry name" value="ThiC"/>
    <property type="match status" value="1"/>
</dbReference>
<dbReference type="InterPro" id="IPR037509">
    <property type="entry name" value="ThiC"/>
</dbReference>
<dbReference type="InterPro" id="IPR038521">
    <property type="entry name" value="ThiC/Bza_core_dom"/>
</dbReference>
<dbReference type="InterPro" id="IPR002817">
    <property type="entry name" value="ThiC/BzaA/B"/>
</dbReference>
<dbReference type="NCBIfam" id="NF009895">
    <property type="entry name" value="PRK13352.1"/>
    <property type="match status" value="1"/>
</dbReference>
<dbReference type="NCBIfam" id="TIGR00190">
    <property type="entry name" value="thiC"/>
    <property type="match status" value="1"/>
</dbReference>
<dbReference type="PANTHER" id="PTHR30557:SF1">
    <property type="entry name" value="PHOSPHOMETHYLPYRIMIDINE SYNTHASE, CHLOROPLASTIC"/>
    <property type="match status" value="1"/>
</dbReference>
<dbReference type="PANTHER" id="PTHR30557">
    <property type="entry name" value="THIAMINE BIOSYNTHESIS PROTEIN THIC"/>
    <property type="match status" value="1"/>
</dbReference>
<dbReference type="Pfam" id="PF01964">
    <property type="entry name" value="ThiC_Rad_SAM"/>
    <property type="match status" value="1"/>
</dbReference>
<dbReference type="SFLD" id="SFLDF00407">
    <property type="entry name" value="phosphomethylpyrimidine_syntha"/>
    <property type="match status" value="1"/>
</dbReference>
<dbReference type="SFLD" id="SFLDG01114">
    <property type="entry name" value="phosphomethylpyrimidine_syntha"/>
    <property type="match status" value="1"/>
</dbReference>
<dbReference type="SFLD" id="SFLDS00113">
    <property type="entry name" value="Radical_SAM_Phosphomethylpyrim"/>
    <property type="match status" value="1"/>
</dbReference>
<accession>Q8TI28</accession>
<keyword id="KW-0004">4Fe-4S</keyword>
<keyword id="KW-0408">Iron</keyword>
<keyword id="KW-0411">Iron-sulfur</keyword>
<keyword id="KW-0456">Lyase</keyword>
<keyword id="KW-0479">Metal-binding</keyword>
<keyword id="KW-1185">Reference proteome</keyword>
<keyword id="KW-0949">S-adenosyl-L-methionine</keyword>
<keyword id="KW-0784">Thiamine biosynthesis</keyword>
<keyword id="KW-0862">Zinc</keyword>
<name>THIC2_METAC</name>
<organism>
    <name type="scientific">Methanosarcina acetivorans (strain ATCC 35395 / DSM 2834 / JCM 12185 / C2A)</name>
    <dbReference type="NCBI Taxonomy" id="188937"/>
    <lineage>
        <taxon>Archaea</taxon>
        <taxon>Methanobacteriati</taxon>
        <taxon>Methanobacteriota</taxon>
        <taxon>Stenosarchaea group</taxon>
        <taxon>Methanomicrobia</taxon>
        <taxon>Methanosarcinales</taxon>
        <taxon>Methanosarcinaceae</taxon>
        <taxon>Methanosarcina</taxon>
    </lineage>
</organism>
<proteinExistence type="inferred from homology"/>
<evidence type="ECO:0000255" key="1">
    <source>
        <dbReference type="HAMAP-Rule" id="MF_00089"/>
    </source>
</evidence>
<sequence length="428" mass="46774">MTIVEDAKKGIITEEMKIVAKDEGLDPEFIRRGIAAGRIVIPTSPYRQVKICGLGEGLRTKVNASIGVSSDIVDVNMEVQKAIAAEKAGADTLMELGTGGDFLGIRKKVIDSISLSVGSVPLYQAFIEAARKYGSIVHMTEDELFNATEAQAKLGTNFMAIHTGINNITLDRLKAHGRYGGLCSRGGAFMSSWMLHNEKENPLYANFDYLVEILKEHEVVLSTGNGMRAGAVHDATDRAQIQELIINSEVAEKAHQQGLQVIVEGPGHVPLDQIATNVKLMKEMSGHKPFYMLGPLVTDIAPGYDHIVTAIGASVSASYGCDFLCYVTPAEHLALPNLEDVITGVKTSRIAAHVGDMIKYPERARQWDLDMGRARRELDWEKMYSLAIDPEHARAVRNSRAPEDTDACTMCGNFCALKIVNQNYNLAK</sequence>
<feature type="chain" id="PRO_0000152860" description="Phosphomethylpyrimidine synthase 2">
    <location>
        <begin position="1"/>
        <end position="428"/>
    </location>
</feature>
<feature type="binding site" evidence="1">
    <location>
        <position position="94"/>
    </location>
    <ligand>
        <name>substrate</name>
    </ligand>
</feature>
<feature type="binding site" evidence="1">
    <location>
        <position position="123"/>
    </location>
    <ligand>
        <name>substrate</name>
    </ligand>
</feature>
<feature type="binding site" evidence="1">
    <location>
        <position position="162"/>
    </location>
    <ligand>
        <name>substrate</name>
    </ligand>
</feature>
<feature type="binding site" evidence="1">
    <location>
        <begin position="184"/>
        <end position="186"/>
    </location>
    <ligand>
        <name>substrate</name>
    </ligand>
</feature>
<feature type="binding site" evidence="1">
    <location>
        <begin position="225"/>
        <end position="228"/>
    </location>
    <ligand>
        <name>substrate</name>
    </ligand>
</feature>
<feature type="binding site" evidence="1">
    <location>
        <position position="264"/>
    </location>
    <ligand>
        <name>substrate</name>
    </ligand>
</feature>
<feature type="binding site" evidence="1">
    <location>
        <position position="268"/>
    </location>
    <ligand>
        <name>Zn(2+)</name>
        <dbReference type="ChEBI" id="CHEBI:29105"/>
    </ligand>
</feature>
<feature type="binding site" evidence="1">
    <location>
        <position position="291"/>
    </location>
    <ligand>
        <name>substrate</name>
    </ligand>
</feature>
<feature type="binding site" evidence="1">
    <location>
        <position position="332"/>
    </location>
    <ligand>
        <name>Zn(2+)</name>
        <dbReference type="ChEBI" id="CHEBI:29105"/>
    </ligand>
</feature>
<feature type="binding site" evidence="1">
    <location>
        <position position="408"/>
    </location>
    <ligand>
        <name>[4Fe-4S] cluster</name>
        <dbReference type="ChEBI" id="CHEBI:49883"/>
        <note>4Fe-4S-S-AdoMet</note>
    </ligand>
</feature>
<feature type="binding site" evidence="1">
    <location>
        <position position="411"/>
    </location>
    <ligand>
        <name>[4Fe-4S] cluster</name>
        <dbReference type="ChEBI" id="CHEBI:49883"/>
        <note>4Fe-4S-S-AdoMet</note>
    </ligand>
</feature>
<feature type="binding site" evidence="1">
    <location>
        <position position="415"/>
    </location>
    <ligand>
        <name>[4Fe-4S] cluster</name>
        <dbReference type="ChEBI" id="CHEBI:49883"/>
        <note>4Fe-4S-S-AdoMet</note>
    </ligand>
</feature>